<name>Y681_CHLPN</name>
<sequence>MQTLARLFGQSPFAPLQAHLEMVVSCVEYMLPIFTALRDGRYEELLEMAKLVSDKEYQADCIKNDMRNHLPAGLFMPISRAGILEIISIQDSIADTAEDVAILLTIRRLNFYPSMETLFFRFLEKNLEAFELTMTLLHEFNQLLESSFGGRKADKARLLVGRVAKSEHESDVLQRELMQIFFSDDFIIPEKEFYLWLQVIRRTAGISDSSEKLAHRINMTLEEK</sequence>
<organism>
    <name type="scientific">Chlamydia pneumoniae</name>
    <name type="common">Chlamydophila pneumoniae</name>
    <dbReference type="NCBI Taxonomy" id="83558"/>
    <lineage>
        <taxon>Bacteria</taxon>
        <taxon>Pseudomonadati</taxon>
        <taxon>Chlamydiota</taxon>
        <taxon>Chlamydiia</taxon>
        <taxon>Chlamydiales</taxon>
        <taxon>Chlamydiaceae</taxon>
        <taxon>Chlamydia/Chlamydophila group</taxon>
        <taxon>Chlamydia</taxon>
    </lineage>
</organism>
<dbReference type="EMBL" id="AE001363">
    <property type="protein sequence ID" value="AAD18820.1"/>
    <property type="molecule type" value="Genomic_DNA"/>
</dbReference>
<dbReference type="EMBL" id="AE002161">
    <property type="protein sequence ID" value="AAF37955.1"/>
    <property type="molecule type" value="Genomic_DNA"/>
</dbReference>
<dbReference type="EMBL" id="BA000008">
    <property type="protein sequence ID" value="BAA98888.1"/>
    <property type="molecule type" value="Genomic_DNA"/>
</dbReference>
<dbReference type="EMBL" id="AE009440">
    <property type="protein sequence ID" value="AAP98637.1"/>
    <property type="molecule type" value="Genomic_DNA"/>
</dbReference>
<dbReference type="PIR" id="E72049">
    <property type="entry name" value="E72049"/>
</dbReference>
<dbReference type="PIR" id="F86575">
    <property type="entry name" value="F86575"/>
</dbReference>
<dbReference type="RefSeq" id="NP_224877.1">
    <property type="nucleotide sequence ID" value="NC_000922.1"/>
</dbReference>
<dbReference type="RefSeq" id="WP_010883319.1">
    <property type="nucleotide sequence ID" value="NZ_LN847257.1"/>
</dbReference>
<dbReference type="SMR" id="Q9Z7M3"/>
<dbReference type="STRING" id="406984.CPK_ORF00082"/>
<dbReference type="GeneID" id="45050732"/>
<dbReference type="KEGG" id="cpa:CP_0066"/>
<dbReference type="KEGG" id="cpj:CPj0681"/>
<dbReference type="KEGG" id="cpn:CPn_0681"/>
<dbReference type="KEGG" id="cpt:CpB0708"/>
<dbReference type="PATRIC" id="fig|115713.3.peg.752"/>
<dbReference type="eggNOG" id="COG1392">
    <property type="taxonomic scope" value="Bacteria"/>
</dbReference>
<dbReference type="HOGENOM" id="CLU_104916_0_1_0"/>
<dbReference type="OMA" id="YLHMQDK"/>
<dbReference type="OrthoDB" id="9780540at2"/>
<dbReference type="Proteomes" id="UP000000583">
    <property type="component" value="Chromosome"/>
</dbReference>
<dbReference type="Proteomes" id="UP000000801">
    <property type="component" value="Chromosome"/>
</dbReference>
<dbReference type="Gene3D" id="1.20.58.220">
    <property type="entry name" value="Phosphate transport system protein phou homolog 2, domain 2"/>
    <property type="match status" value="1"/>
</dbReference>
<dbReference type="InterPro" id="IPR002727">
    <property type="entry name" value="DUF47"/>
</dbReference>
<dbReference type="InterPro" id="IPR038078">
    <property type="entry name" value="PhoU-like_sf"/>
</dbReference>
<dbReference type="InterPro" id="IPR018445">
    <property type="entry name" value="Put_Phosphate_transp_reg"/>
</dbReference>
<dbReference type="NCBIfam" id="TIGR00153">
    <property type="entry name" value="TIGR00153 family protein"/>
    <property type="match status" value="1"/>
</dbReference>
<dbReference type="PANTHER" id="PTHR36536">
    <property type="entry name" value="UPF0111 PROTEIN HI_1603"/>
    <property type="match status" value="1"/>
</dbReference>
<dbReference type="PANTHER" id="PTHR36536:SF3">
    <property type="entry name" value="UPF0111 PROTEIN HI_1603"/>
    <property type="match status" value="1"/>
</dbReference>
<dbReference type="Pfam" id="PF01865">
    <property type="entry name" value="PhoU_div"/>
    <property type="match status" value="1"/>
</dbReference>
<dbReference type="SUPFAM" id="SSF109755">
    <property type="entry name" value="PhoU-like"/>
    <property type="match status" value="1"/>
</dbReference>
<evidence type="ECO:0000305" key="1"/>
<protein>
    <recommendedName>
        <fullName>UPF0111 protein CPn_0681/CP_0066/CPj0681/CpB0708</fullName>
    </recommendedName>
</protein>
<gene>
    <name type="ordered locus">CPn_0681</name>
    <name type="ordered locus">CP_0066</name>
    <name type="ordered locus">CPj0681</name>
    <name type="ordered locus">CpB0708</name>
</gene>
<comment type="similarity">
    <text evidence="1">Belongs to the UPF0111 family.</text>
</comment>
<accession>Q9Z7M3</accession>
<accession>Q9JQF7</accession>
<reference key="1">
    <citation type="journal article" date="1999" name="Nat. Genet.">
        <title>Comparative genomes of Chlamydia pneumoniae and C. trachomatis.</title>
        <authorList>
            <person name="Kalman S."/>
            <person name="Mitchell W.P."/>
            <person name="Marathe R."/>
            <person name="Lammel C.J."/>
            <person name="Fan J."/>
            <person name="Hyman R.W."/>
            <person name="Olinger L."/>
            <person name="Grimwood J."/>
            <person name="Davis R.W."/>
            <person name="Stephens R.S."/>
        </authorList>
    </citation>
    <scope>NUCLEOTIDE SEQUENCE [LARGE SCALE GENOMIC DNA]</scope>
    <source>
        <strain>CWL029</strain>
    </source>
</reference>
<reference key="2">
    <citation type="journal article" date="2000" name="Nucleic Acids Res.">
        <title>Genome sequences of Chlamydia trachomatis MoPn and Chlamydia pneumoniae AR39.</title>
        <authorList>
            <person name="Read T.D."/>
            <person name="Brunham R.C."/>
            <person name="Shen C."/>
            <person name="Gill S.R."/>
            <person name="Heidelberg J.F."/>
            <person name="White O."/>
            <person name="Hickey E.K."/>
            <person name="Peterson J.D."/>
            <person name="Utterback T.R."/>
            <person name="Berry K.J."/>
            <person name="Bass S."/>
            <person name="Linher K.D."/>
            <person name="Weidman J.F."/>
            <person name="Khouri H.M."/>
            <person name="Craven B."/>
            <person name="Bowman C."/>
            <person name="Dodson R.J."/>
            <person name="Gwinn M.L."/>
            <person name="Nelson W.C."/>
            <person name="DeBoy R.T."/>
            <person name="Kolonay J.F."/>
            <person name="McClarty G."/>
            <person name="Salzberg S.L."/>
            <person name="Eisen J.A."/>
            <person name="Fraser C.M."/>
        </authorList>
    </citation>
    <scope>NUCLEOTIDE SEQUENCE [LARGE SCALE GENOMIC DNA]</scope>
    <source>
        <strain>AR39</strain>
    </source>
</reference>
<reference key="3">
    <citation type="journal article" date="2000" name="Nucleic Acids Res.">
        <title>Comparison of whole genome sequences of Chlamydia pneumoniae J138 from Japan and CWL029 from USA.</title>
        <authorList>
            <person name="Shirai M."/>
            <person name="Hirakawa H."/>
            <person name="Kimoto M."/>
            <person name="Tabuchi M."/>
            <person name="Kishi F."/>
            <person name="Ouchi K."/>
            <person name="Shiba T."/>
            <person name="Ishii K."/>
            <person name="Hattori M."/>
            <person name="Kuhara S."/>
            <person name="Nakazawa T."/>
        </authorList>
    </citation>
    <scope>NUCLEOTIDE SEQUENCE [LARGE SCALE GENOMIC DNA]</scope>
    <source>
        <strain>J138</strain>
    </source>
</reference>
<reference key="4">
    <citation type="submission" date="2002-05" db="EMBL/GenBank/DDBJ databases">
        <title>The genome sequence of Chlamydia pneumoniae TW183 and comparison with other Chlamydia strains based on whole genome sequence analysis.</title>
        <authorList>
            <person name="Geng M.M."/>
            <person name="Schuhmacher A."/>
            <person name="Muehldorfer I."/>
            <person name="Bensch K.W."/>
            <person name="Schaefer K.P."/>
            <person name="Schneider S."/>
            <person name="Pohl T."/>
            <person name="Essig A."/>
            <person name="Marre R."/>
            <person name="Melchers K."/>
        </authorList>
    </citation>
    <scope>NUCLEOTIDE SEQUENCE [LARGE SCALE GENOMIC DNA]</scope>
    <source>
        <strain>TW-183</strain>
    </source>
</reference>
<proteinExistence type="inferred from homology"/>
<feature type="chain" id="PRO_0000154907" description="UPF0111 protein CPn_0681/CP_0066/CPj0681/CpB0708">
    <location>
        <begin position="1"/>
        <end position="224"/>
    </location>
</feature>